<gene>
    <name type="ordered locus">At2g42465</name>
    <name type="ORF">MHK10.19</name>
</gene>
<dbReference type="EMBL" id="AC005956">
    <property type="protein sequence ID" value="AAD23728.1"/>
    <property type="status" value="ALT_SEQ"/>
    <property type="molecule type" value="Genomic_DNA"/>
</dbReference>
<dbReference type="EMBL" id="CP002685">
    <property type="protein sequence ID" value="ANM62881.1"/>
    <property type="molecule type" value="Genomic_DNA"/>
</dbReference>
<dbReference type="PIR" id="C84854">
    <property type="entry name" value="C84854"/>
</dbReference>
<dbReference type="RefSeq" id="NP_001325007.1">
    <property type="nucleotide sequence ID" value="NM_001336975.1"/>
</dbReference>
<dbReference type="SMR" id="P0DKG4"/>
<dbReference type="FunCoup" id="P0DKG4">
    <property type="interactions" value="45"/>
</dbReference>
<dbReference type="PaxDb" id="3702-AT2G42470.1"/>
<dbReference type="EnsemblPlants" id="AT2G42465.1">
    <property type="protein sequence ID" value="AT2G42465.1"/>
    <property type="gene ID" value="AT2G42465"/>
</dbReference>
<dbReference type="GeneID" id="28718348"/>
<dbReference type="Gramene" id="AT2G42465.1">
    <property type="protein sequence ID" value="AT2G42465.1"/>
    <property type="gene ID" value="AT2G42465"/>
</dbReference>
<dbReference type="KEGG" id="ath:AT2G42465"/>
<dbReference type="Araport" id="AT2G42465"/>
<dbReference type="TAIR" id="AT2G42465"/>
<dbReference type="eggNOG" id="KOG1987">
    <property type="taxonomic scope" value="Eukaryota"/>
</dbReference>
<dbReference type="InParanoid" id="P0DKG4"/>
<dbReference type="OMA" id="CAHFTRQ"/>
<dbReference type="PRO" id="PR:P0DKG4"/>
<dbReference type="Proteomes" id="UP000006548">
    <property type="component" value="Chromosome 2"/>
</dbReference>
<dbReference type="ExpressionAtlas" id="P0DKG4">
    <property type="expression patterns" value="baseline"/>
</dbReference>
<dbReference type="CDD" id="cd00121">
    <property type="entry name" value="MATH"/>
    <property type="match status" value="1"/>
</dbReference>
<dbReference type="Gene3D" id="2.60.210.10">
    <property type="entry name" value="Apoptosis, Tumor Necrosis Factor Receptor Associated Protein 2, Chain A"/>
    <property type="match status" value="1"/>
</dbReference>
<dbReference type="InterPro" id="IPR050804">
    <property type="entry name" value="MATH-CC_domain_protein"/>
</dbReference>
<dbReference type="InterPro" id="IPR002083">
    <property type="entry name" value="MATH/TRAF_dom"/>
</dbReference>
<dbReference type="InterPro" id="IPR008974">
    <property type="entry name" value="TRAF-like"/>
</dbReference>
<dbReference type="PANTHER" id="PTHR46236:SF12">
    <property type="entry name" value="MATH DOMAIN-CONTAINING PROTEIN"/>
    <property type="match status" value="1"/>
</dbReference>
<dbReference type="PANTHER" id="PTHR46236">
    <property type="entry name" value="TRAF-LIKE SUPERFAMILY PROTEIN"/>
    <property type="match status" value="1"/>
</dbReference>
<dbReference type="Pfam" id="PF22486">
    <property type="entry name" value="MATH_2"/>
    <property type="match status" value="1"/>
</dbReference>
<dbReference type="SMART" id="SM00061">
    <property type="entry name" value="MATH"/>
    <property type="match status" value="1"/>
</dbReference>
<dbReference type="SUPFAM" id="SSF49599">
    <property type="entry name" value="TRAF domain-like"/>
    <property type="match status" value="1"/>
</dbReference>
<dbReference type="PROSITE" id="PS50144">
    <property type="entry name" value="MATH"/>
    <property type="match status" value="1"/>
</dbReference>
<proteinExistence type="predicted"/>
<keyword id="KW-0175">Coiled coil</keyword>
<keyword id="KW-1185">Reference proteome</keyword>
<name>MCC07_ARATH</name>
<feature type="chain" id="PRO_0000429284" description="MATH domain and coiled-coil domain-containing protein At2g42465">
    <location>
        <begin position="1"/>
        <end position="415"/>
    </location>
</feature>
<feature type="domain" description="MATH" evidence="2">
    <location>
        <begin position="6"/>
        <end position="130"/>
    </location>
</feature>
<feature type="coiled-coil region" evidence="1">
    <location>
        <begin position="244"/>
        <end position="341"/>
    </location>
</feature>
<comment type="sequence caution" evidence="3">
    <conflict type="erroneous gene model prediction">
        <sequence resource="EMBL-CDS" id="AAD23728"/>
    </conflict>
    <text>The predicted gene has been split into 2 genes: At2g42465 and At2g42470.</text>
</comment>
<protein>
    <recommendedName>
        <fullName>MATH domain and coiled-coil domain-containing protein At2g42465</fullName>
    </recommendedName>
    <alternativeName>
        <fullName>RTM3-like protein At2g42465</fullName>
    </alternativeName>
</protein>
<evidence type="ECO:0000255" key="1"/>
<evidence type="ECO:0000255" key="2">
    <source>
        <dbReference type="PROSITE-ProRule" id="PRU00129"/>
    </source>
</evidence>
<evidence type="ECO:0000305" key="3"/>
<organism>
    <name type="scientific">Arabidopsis thaliana</name>
    <name type="common">Mouse-ear cress</name>
    <dbReference type="NCBI Taxonomy" id="3702"/>
    <lineage>
        <taxon>Eukaryota</taxon>
        <taxon>Viridiplantae</taxon>
        <taxon>Streptophyta</taxon>
        <taxon>Embryophyta</taxon>
        <taxon>Tracheophyta</taxon>
        <taxon>Spermatophyta</taxon>
        <taxon>Magnoliopsida</taxon>
        <taxon>eudicotyledons</taxon>
        <taxon>Gunneridae</taxon>
        <taxon>Pentapetalae</taxon>
        <taxon>rosids</taxon>
        <taxon>malvids</taxon>
        <taxon>Brassicales</taxon>
        <taxon>Brassicaceae</taxon>
        <taxon>Camelineae</taxon>
        <taxon>Arabidopsis</taxon>
    </lineage>
</organism>
<reference key="1">
    <citation type="journal article" date="1999" name="Nature">
        <title>Sequence and analysis of chromosome 2 of the plant Arabidopsis thaliana.</title>
        <authorList>
            <person name="Lin X."/>
            <person name="Kaul S."/>
            <person name="Rounsley S.D."/>
            <person name="Shea T.P."/>
            <person name="Benito M.-I."/>
            <person name="Town C.D."/>
            <person name="Fujii C.Y."/>
            <person name="Mason T.M."/>
            <person name="Bowman C.L."/>
            <person name="Barnstead M.E."/>
            <person name="Feldblyum T.V."/>
            <person name="Buell C.R."/>
            <person name="Ketchum K.A."/>
            <person name="Lee J.J."/>
            <person name="Ronning C.M."/>
            <person name="Koo H.L."/>
            <person name="Moffat K.S."/>
            <person name="Cronin L.A."/>
            <person name="Shen M."/>
            <person name="Pai G."/>
            <person name="Van Aken S."/>
            <person name="Umayam L."/>
            <person name="Tallon L.J."/>
            <person name="Gill J.E."/>
            <person name="Adams M.D."/>
            <person name="Carrera A.J."/>
            <person name="Creasy T.H."/>
            <person name="Goodman H.M."/>
            <person name="Somerville C.R."/>
            <person name="Copenhaver G.P."/>
            <person name="Preuss D."/>
            <person name="Nierman W.C."/>
            <person name="White O."/>
            <person name="Eisen J.A."/>
            <person name="Salzberg S.L."/>
            <person name="Fraser C.M."/>
            <person name="Venter J.C."/>
        </authorList>
    </citation>
    <scope>NUCLEOTIDE SEQUENCE [LARGE SCALE GENOMIC DNA]</scope>
    <source>
        <strain>cv. Columbia</strain>
    </source>
</reference>
<reference key="2">
    <citation type="journal article" date="2017" name="Plant J.">
        <title>Araport11: a complete reannotation of the Arabidopsis thaliana reference genome.</title>
        <authorList>
            <person name="Cheng C.Y."/>
            <person name="Krishnakumar V."/>
            <person name="Chan A.P."/>
            <person name="Thibaud-Nissen F."/>
            <person name="Schobel S."/>
            <person name="Town C.D."/>
        </authorList>
    </citation>
    <scope>GENOME REANNOTATION</scope>
    <source>
        <strain>cv. Columbia</strain>
    </source>
</reference>
<reference key="3">
    <citation type="journal article" date="2010" name="Plant Physiol.">
        <title>RTM3, which controls long-distance movement of potyviruses, is a member of a new plant gene family encoding a meprin and TRAF homology domain-containing protein.</title>
        <authorList>
            <person name="Cosson P."/>
            <person name="Sofer L."/>
            <person name="Le Q.H."/>
            <person name="Leger V."/>
            <person name="Schurdi-Levraud V."/>
            <person name="Whitham S.A."/>
            <person name="Yamamoto M.L."/>
            <person name="Gopalan S."/>
            <person name="Le Gall O."/>
            <person name="Candresse T."/>
            <person name="Carrington J.C."/>
            <person name="Revers F."/>
        </authorList>
    </citation>
    <scope>GENE FAMILY</scope>
</reference>
<accession>P0DKG4</accession>
<accession>Q9SLB3</accession>
<sequence length="415" mass="47196">MGTQFRKALTLTVTNFSQKSSPINSPPFPSGGCNWYIKFYPKGSADDNYLSLFLSPDDPKSLGLNWKRRANFYFVLLNQSGKELHRTPEIGDQWFCDDSLSWGFPQTLPRKKLLDKIFLDNDRFNIEIYIKVIEVVEGYHMFPASFTNKLLRSSLEYPDKSEKETVDINGFKVLSSQVTSVKRIFEEHPDIAEDFRSKNQVVKTEYMSVLLRVIETMAKPPQSISETELSNVHSELTELTEVGFKLEWLKAKLEEVCVAFKKANADGCRIQQLEEHVKNLEQTVSDLKVEMDKEKAKSTAKVLSLEDTLSDLKTELGKEKAKNATATDKFLLLKDTYSDLKVELEKEKAKSTSAAAKVLSLKEALSDLKVELDDQKIVNSATTANVLSWEDDDDLFSHTNCLGIQQKTNAYKRIN</sequence>